<dbReference type="PIR" id="A59352">
    <property type="entry name" value="A59352"/>
</dbReference>
<dbReference type="SMR" id="P82811"/>
<dbReference type="GO" id="GO:0005576">
    <property type="term" value="C:extracellular region"/>
    <property type="evidence" value="ECO:0007669"/>
    <property type="project" value="UniProtKB-SubCell"/>
</dbReference>
<dbReference type="GO" id="GO:0019871">
    <property type="term" value="F:sodium channel inhibitor activity"/>
    <property type="evidence" value="ECO:0007669"/>
    <property type="project" value="InterPro"/>
</dbReference>
<dbReference type="GO" id="GO:0090729">
    <property type="term" value="F:toxin activity"/>
    <property type="evidence" value="ECO:0007669"/>
    <property type="project" value="UniProtKB-KW"/>
</dbReference>
<dbReference type="GO" id="GO:0006952">
    <property type="term" value="P:defense response"/>
    <property type="evidence" value="ECO:0007669"/>
    <property type="project" value="InterPro"/>
</dbReference>
<dbReference type="CDD" id="cd23106">
    <property type="entry name" value="neurotoxins_LC_scorpion"/>
    <property type="match status" value="1"/>
</dbReference>
<dbReference type="Gene3D" id="3.30.30.10">
    <property type="entry name" value="Knottin, scorpion toxin-like"/>
    <property type="match status" value="1"/>
</dbReference>
<dbReference type="InterPro" id="IPR044062">
    <property type="entry name" value="LCN-type_CS_alpha_beta_dom"/>
</dbReference>
<dbReference type="InterPro" id="IPR003614">
    <property type="entry name" value="Scorpion_toxin-like"/>
</dbReference>
<dbReference type="InterPro" id="IPR036574">
    <property type="entry name" value="Scorpion_toxin-like_sf"/>
</dbReference>
<dbReference type="InterPro" id="IPR018218">
    <property type="entry name" value="Scorpion_toxinL"/>
</dbReference>
<dbReference type="InterPro" id="IPR002061">
    <property type="entry name" value="Scorpion_toxinL/defensin"/>
</dbReference>
<dbReference type="Pfam" id="PF00537">
    <property type="entry name" value="Toxin_3"/>
    <property type="match status" value="1"/>
</dbReference>
<dbReference type="PRINTS" id="PR00285">
    <property type="entry name" value="SCORPNTOXIN"/>
</dbReference>
<dbReference type="SMART" id="SM00505">
    <property type="entry name" value="Knot1"/>
    <property type="match status" value="1"/>
</dbReference>
<dbReference type="SUPFAM" id="SSF57095">
    <property type="entry name" value="Scorpion toxin-like"/>
    <property type="match status" value="1"/>
</dbReference>
<dbReference type="PROSITE" id="PS51863">
    <property type="entry name" value="LCN_CSAB"/>
    <property type="match status" value="1"/>
</dbReference>
<name>SIX1_HOTTS</name>
<organism>
    <name type="scientific">Hottentotta tamulus sindicus</name>
    <name type="common">Scorpion</name>
    <name type="synonym">Buthus sindicus</name>
    <dbReference type="NCBI Taxonomy" id="42519"/>
    <lineage>
        <taxon>Eukaryota</taxon>
        <taxon>Metazoa</taxon>
        <taxon>Ecdysozoa</taxon>
        <taxon>Arthropoda</taxon>
        <taxon>Chelicerata</taxon>
        <taxon>Arachnida</taxon>
        <taxon>Scorpiones</taxon>
        <taxon>Buthida</taxon>
        <taxon>Buthoidea</taxon>
        <taxon>Buthidae</taxon>
        <taxon>Mesobuthus</taxon>
    </lineage>
</organism>
<sequence>DGYILMRNGCKIPCLFGNDGCNKECKAYGGSYGYCWTYGLACACEGQPEDKKHLNYHKKTC</sequence>
<reference key="1">
    <citation type="journal article" date="2001" name="Arch. Biochem. Biophys.">
        <title>Purification, characterization, and primary structure of four depressant insect-selective neurotoxin analogs from scorpion (Buthus sindicus) venom.</title>
        <authorList>
            <person name="Ali S.A."/>
            <person name="Stoeva S."/>
            <person name="Grossmann J.G."/>
            <person name="Abbasi A."/>
            <person name="Voelter W."/>
        </authorList>
    </citation>
    <scope>PROTEIN SEQUENCE</scope>
    <scope>FUNCTION</scope>
    <scope>TOXIC DOSE</scope>
    <scope>MASS SPECTROMETRY</scope>
    <source>
        <tissue>Venom</tissue>
    </source>
</reference>
<keyword id="KW-0903">Direct protein sequencing</keyword>
<keyword id="KW-1015">Disulfide bond</keyword>
<keyword id="KW-0872">Ion channel impairing toxin</keyword>
<keyword id="KW-0528">Neurotoxin</keyword>
<keyword id="KW-0964">Secreted</keyword>
<keyword id="KW-0800">Toxin</keyword>
<keyword id="KW-0738">Voltage-gated sodium channel impairing toxin</keyword>
<accession>P82811</accession>
<proteinExistence type="evidence at protein level"/>
<evidence type="ECO:0000250" key="1"/>
<evidence type="ECO:0000255" key="2">
    <source>
        <dbReference type="PROSITE-ProRule" id="PRU01210"/>
    </source>
</evidence>
<evidence type="ECO:0000269" key="3">
    <source>
    </source>
</evidence>
<evidence type="ECO:0000305" key="4"/>
<protein>
    <recommendedName>
        <fullName>Insect toxin BsIT1</fullName>
        <shortName>Insect toxin 1</shortName>
    </recommendedName>
    <alternativeName>
        <fullName>Bs-dprIT1</fullName>
    </alternativeName>
</protein>
<feature type="chain" id="PRO_0000066718" description="Insect toxin BsIT1">
    <location>
        <begin position="1"/>
        <end position="61"/>
    </location>
</feature>
<feature type="domain" description="LCN-type CS-alpha/beta" evidence="2">
    <location>
        <begin position="1"/>
        <end position="61"/>
    </location>
</feature>
<feature type="disulfide bond" evidence="2">
    <location>
        <begin position="10"/>
        <end position="61"/>
    </location>
</feature>
<feature type="disulfide bond" evidence="2">
    <location>
        <begin position="14"/>
        <end position="35"/>
    </location>
</feature>
<feature type="disulfide bond" evidence="2">
    <location>
        <begin position="21"/>
        <end position="42"/>
    </location>
</feature>
<feature type="disulfide bond" evidence="2">
    <location>
        <begin position="25"/>
        <end position="44"/>
    </location>
</feature>
<comment type="function">
    <text evidence="1 3">Depressant insect beta-toxins cause a transient contraction paralysis followed by a slow flaccid paralysis. They bind voltage-independently at site-4 of sodium channels (Nav) and shift the voltage of activation toward more negative potentials thereby affecting sodium channel activation and promoting spontaneous and repetitive firing (By similarity). This toxin is active only on insects and causes a transient contraction paralysis followed by a slow flaccid paralysis.</text>
</comment>
<comment type="subcellular location">
    <subcellularLocation>
        <location>Secreted</location>
    </subcellularLocation>
</comment>
<comment type="tissue specificity">
    <text>Expressed by the venom gland.</text>
</comment>
<comment type="domain">
    <text evidence="4">Has the structural arrangement of an alpha-helix connected to antiparallel beta-sheets by disulfide bonds (CS-alpha/beta).</text>
</comment>
<comment type="mass spectrometry"/>
<comment type="toxic dose">
    <text evidence="3">LD(50) is 67 ng/100 mg of body weight of blowfly larvae (S.falculata) and 138 ng/100 mg of body weight of cockroaches (B.germanica).</text>
</comment>
<comment type="similarity">
    <text evidence="4">Belongs to the long (4 C-C) scorpion toxin superfamily. Sodium channel inhibitor family. Beta subfamily.</text>
</comment>